<gene>
    <name evidence="7" type="primary">H2bc26</name>
    <name evidence="20" type="synonym">H2bc26-ps</name>
    <name evidence="7" type="synonym">H2bu1</name>
    <name evidence="20" type="synonym">H2bu1-ps</name>
    <name evidence="20" type="synonym">Hist3h2bb</name>
    <name type="synonym">Hist3h2bb-ps</name>
</gene>
<protein>
    <recommendedName>
        <fullName>Histone H2B type 3-B</fullName>
    </recommendedName>
    <alternativeName>
        <fullName evidence="7">H2B-clustered histone 26</fullName>
    </alternativeName>
    <alternativeName>
        <fullName evidence="7">H2B.U histone 1</fullName>
    </alternativeName>
</protein>
<keyword id="KW-0007">Acetylation</keyword>
<keyword id="KW-0013">ADP-ribosylation</keyword>
<keyword id="KW-0158">Chromosome</keyword>
<keyword id="KW-0238">DNA-binding</keyword>
<keyword id="KW-0325">Glycoprotein</keyword>
<keyword id="KW-0379">Hydroxylation</keyword>
<keyword id="KW-1017">Isopeptide bond</keyword>
<keyword id="KW-0488">Methylation</keyword>
<keyword id="KW-0544">Nucleosome core</keyword>
<keyword id="KW-0539">Nucleus</keyword>
<keyword id="KW-0597">Phosphoprotein</keyword>
<keyword id="KW-1185">Reference proteome</keyword>
<keyword id="KW-0832">Ubl conjugation</keyword>
<feature type="initiator methionine" description="Removed" evidence="1">
    <location>
        <position position="1"/>
    </location>
</feature>
<feature type="chain" id="PRO_0000244838" description="Histone H2B type 3-B">
    <location>
        <begin position="2"/>
        <end position="126"/>
    </location>
</feature>
<feature type="region of interest" description="Disordered" evidence="9">
    <location>
        <begin position="1"/>
        <end position="35"/>
    </location>
</feature>
<feature type="compositionally biased region" description="Low complexity" evidence="9">
    <location>
        <begin position="1"/>
        <end position="12"/>
    </location>
</feature>
<feature type="modified residue" description="N-acetylproline" evidence="1">
    <location>
        <position position="2"/>
    </location>
</feature>
<feature type="modified residue" description="N6-(2-hydroxyisobutyryl)lysine; alternate" evidence="15">
    <location>
        <position position="6"/>
    </location>
</feature>
<feature type="modified residue" description="N6-(beta-hydroxybutyryl)lysine; alternate" evidence="16">
    <location>
        <position position="6"/>
    </location>
</feature>
<feature type="modified residue" description="N6-acetyllysine; alternate" evidence="7">
    <location>
        <position position="6"/>
    </location>
</feature>
<feature type="modified residue" description="N6-butyryllysine; alternate" evidence="2">
    <location>
        <position position="6"/>
    </location>
</feature>
<feature type="modified residue" description="N6-crotonyllysine; alternate" evidence="13">
    <location>
        <position position="6"/>
    </location>
</feature>
<feature type="modified residue" description="N6-lactoyllysine; alternate" evidence="17">
    <location>
        <position position="6"/>
    </location>
</feature>
<feature type="modified residue" description="ADP-ribosylserine" evidence="2">
    <location>
        <position position="7"/>
    </location>
</feature>
<feature type="modified residue" description="N6-(beta-hydroxybutyryl)lysine; alternate" evidence="16">
    <location>
        <position position="12"/>
    </location>
</feature>
<feature type="modified residue" description="N6-acetyllysine; alternate" evidence="7">
    <location>
        <position position="12"/>
    </location>
</feature>
<feature type="modified residue" description="N6-crotonyllysine; alternate" evidence="13">
    <location>
        <position position="12"/>
    </location>
</feature>
<feature type="modified residue" description="N6-lactoyllysine; alternate" evidence="17">
    <location>
        <position position="12"/>
    </location>
</feature>
<feature type="modified residue" description="N6-(2-hydroxyisobutyryl)lysine; alternate" evidence="15">
    <location>
        <position position="13"/>
    </location>
</feature>
<feature type="modified residue" description="N6-acetyllysine; alternate" evidence="7">
    <location>
        <position position="13"/>
    </location>
</feature>
<feature type="modified residue" description="N6-crotonyllysine; alternate" evidence="13">
    <location>
        <position position="13"/>
    </location>
</feature>
<feature type="modified residue" description="Phosphoserine; by STK4/MST1" evidence="10 11">
    <location>
        <position position="15"/>
    </location>
</feature>
<feature type="modified residue" description="N6-acetyllysine; alternate" evidence="7">
    <location>
        <position position="16"/>
    </location>
</feature>
<feature type="modified residue" description="N6-crotonyllysine; alternate" evidence="13">
    <location>
        <position position="16"/>
    </location>
</feature>
<feature type="modified residue" description="N6-lactoyllysine; alternate" evidence="17">
    <location>
        <position position="16"/>
    </location>
</feature>
<feature type="modified residue" description="N6-acetyllysine; alternate" evidence="7">
    <location>
        <position position="17"/>
    </location>
</feature>
<feature type="modified residue" description="N6-crotonyllysine; alternate" evidence="13">
    <location>
        <position position="17"/>
    </location>
</feature>
<feature type="modified residue" description="N6-glutaryllysine; alternate" evidence="2">
    <location>
        <position position="17"/>
    </location>
</feature>
<feature type="modified residue" description="N6-lactoyllysine; alternate" evidence="17">
    <location>
        <position position="17"/>
    </location>
</feature>
<feature type="modified residue" description="N6-(2-hydroxyisobutyryl)lysine; alternate" evidence="15">
    <location>
        <position position="21"/>
    </location>
</feature>
<feature type="modified residue" description="N6-(beta-hydroxybutyryl)lysine; alternate" evidence="16">
    <location>
        <position position="21"/>
    </location>
</feature>
<feature type="modified residue" description="N6-acetyllysine; alternate" evidence="7">
    <location>
        <position position="21"/>
    </location>
</feature>
<feature type="modified residue" description="N6-butyryllysine; alternate" evidence="2">
    <location>
        <position position="21"/>
    </location>
</feature>
<feature type="modified residue" description="N6-crotonyllysine; alternate" evidence="13">
    <location>
        <position position="21"/>
    </location>
</feature>
<feature type="modified residue" description="N6-lactoyllysine; alternate" evidence="17">
    <location>
        <position position="21"/>
    </location>
</feature>
<feature type="modified residue" description="N6-(2-hydroxyisobutyryl)lysine; alternate" evidence="15">
    <location>
        <position position="24"/>
    </location>
</feature>
<feature type="modified residue" description="N6-acetyllysine; alternate" evidence="2">
    <location>
        <position position="24"/>
    </location>
</feature>
<feature type="modified residue" description="N6-crotonyllysine; alternate" evidence="13">
    <location>
        <position position="24"/>
    </location>
</feature>
<feature type="modified residue" description="N6-lactoyllysine; alternate" evidence="2">
    <location>
        <position position="24"/>
    </location>
</feature>
<feature type="modified residue" description="N6-(2-hydroxyisobutyryl)lysine" evidence="15">
    <location>
        <position position="25"/>
    </location>
</feature>
<feature type="modified residue" description="N6-(2-hydroxyisobutyryl)lysine; alternate" evidence="15">
    <location>
        <position position="35"/>
    </location>
</feature>
<feature type="modified residue" description="N6-(beta-hydroxybutyryl)lysine; alternate" evidence="16">
    <location>
        <position position="35"/>
    </location>
</feature>
<feature type="modified residue" description="N6-crotonyllysine; alternate" evidence="13">
    <location>
        <position position="35"/>
    </location>
</feature>
<feature type="modified residue" description="N6-glutaryllysine; alternate" evidence="2">
    <location>
        <position position="35"/>
    </location>
</feature>
<feature type="modified residue" description="N6-succinyllysine; alternate" evidence="7">
    <location>
        <position position="35"/>
    </location>
</feature>
<feature type="modified residue" description="PolyADP-ribosyl glutamic acid" evidence="18">
    <location>
        <position position="36"/>
    </location>
</feature>
<feature type="modified residue" description="Phosphoserine; by AMPK" evidence="12 18">
    <location>
        <position position="37"/>
    </location>
</feature>
<feature type="modified residue" description="N6-(2-hydroxyisobutyryl)lysine; alternate" evidence="15">
    <location>
        <position position="44"/>
    </location>
</feature>
<feature type="modified residue" description="N6-glutaryllysine; alternate" evidence="2">
    <location>
        <position position="44"/>
    </location>
</feature>
<feature type="modified residue" description="N6-lactoyllysine; alternate" evidence="2">
    <location>
        <position position="44"/>
    </location>
</feature>
<feature type="modified residue" description="N6-(2-hydroxyisobutyryl)lysine; alternate" evidence="15">
    <location>
        <position position="47"/>
    </location>
</feature>
<feature type="modified residue" description="N6-glutaryllysine; alternate" evidence="2">
    <location>
        <position position="47"/>
    </location>
</feature>
<feature type="modified residue" description="N6-methyllysine; alternate" evidence="7">
    <location>
        <position position="47"/>
    </location>
</feature>
<feature type="modified residue" description="N6,N6-dimethyllysine; alternate" evidence="7">
    <location>
        <position position="58"/>
    </location>
</feature>
<feature type="modified residue" description="N6-(2-hydroxyisobutyryl)lysine; alternate" evidence="15">
    <location>
        <position position="58"/>
    </location>
</feature>
<feature type="modified residue" description="Dimethylated arginine" evidence="8">
    <location>
        <position position="80"/>
    </location>
</feature>
<feature type="modified residue" description="N6,N6,N6-trimethyllysine; alternate" evidence="8">
    <location>
        <position position="86"/>
    </location>
</feature>
<feature type="modified residue" description="N6-(2-hydroxyisobutyryl)lysine; alternate" evidence="15">
    <location>
        <position position="86"/>
    </location>
</feature>
<feature type="modified residue" description="N6-acetyllysine; alternate" evidence="8">
    <location>
        <position position="86"/>
    </location>
</feature>
<feature type="modified residue" description="N6-lactoyllysine; alternate" evidence="17">
    <location>
        <position position="86"/>
    </location>
</feature>
<feature type="modified residue" description="Omega-N-methylarginine" evidence="8">
    <location>
        <position position="87"/>
    </location>
</feature>
<feature type="modified residue" description="Omega-N-methylarginine" evidence="8">
    <location>
        <position position="93"/>
    </location>
</feature>
<feature type="modified residue" description="N6-(2-hydroxyisobutyryl)lysine; alternate" evidence="15">
    <location>
        <position position="109"/>
    </location>
</feature>
<feature type="modified residue" description="N6-(beta-hydroxybutyryl)lysine; alternate" evidence="16">
    <location>
        <position position="109"/>
    </location>
</feature>
<feature type="modified residue" description="N6-glutaryllysine; alternate" evidence="2">
    <location>
        <position position="109"/>
    </location>
</feature>
<feature type="modified residue" description="N6-lactoyllysine; alternate" evidence="17">
    <location>
        <position position="109"/>
    </location>
</feature>
<feature type="modified residue" description="N6-methyllysine; alternate" evidence="7">
    <location>
        <position position="109"/>
    </location>
</feature>
<feature type="modified residue" description="Phosphothreonine" evidence="5">
    <location>
        <position position="116"/>
    </location>
</feature>
<feature type="modified residue" description="N6-(2-hydroxyisobutyryl)lysine; alternate" evidence="15">
    <location>
        <position position="117"/>
    </location>
</feature>
<feature type="modified residue" description="N6-(beta-hydroxybutyryl)lysine; alternate" evidence="16">
    <location>
        <position position="117"/>
    </location>
</feature>
<feature type="modified residue" description="N6-glutaryllysine; alternate" evidence="2">
    <location>
        <position position="117"/>
    </location>
</feature>
<feature type="modified residue" description="N6-lactoyllysine; alternate" evidence="17">
    <location>
        <position position="117"/>
    </location>
</feature>
<feature type="modified residue" description="N6-methylated lysine; alternate" evidence="5">
    <location>
        <position position="117"/>
    </location>
</feature>
<feature type="modified residue" description="N6-succinyllysine; alternate" evidence="7">
    <location>
        <position position="117"/>
    </location>
</feature>
<feature type="modified residue" description="N6-(2-hydroxyisobutyryl)lysine; alternate" evidence="15">
    <location>
        <position position="121"/>
    </location>
</feature>
<feature type="modified residue" description="N6-glutaryllysine; alternate" evidence="2">
    <location>
        <position position="121"/>
    </location>
</feature>
<feature type="modified residue" description="N6-lactoyllysine; alternate" evidence="2">
    <location>
        <position position="121"/>
    </location>
</feature>
<feature type="modified residue" description="N6-succinyllysine; alternate" evidence="14">
    <location>
        <position position="121"/>
    </location>
</feature>
<feature type="glycosylation site" description="O-linked (GlcNAc) serine" evidence="4">
    <location>
        <position position="113"/>
    </location>
</feature>
<feature type="cross-link" description="Glycyl lysine isopeptide (Lys-Gly) (interchain with G-Cter in SUMO2); alternate" evidence="3">
    <location>
        <position position="6"/>
    </location>
</feature>
<feature type="cross-link" description="Glycyl lysine isopeptide (Lys-Gly) (interchain with G-Cter in SUMO2); alternate" evidence="6">
    <location>
        <position position="21"/>
    </location>
</feature>
<feature type="cross-link" description="Glycyl lysine isopeptide (Lys-Gly) (interchain with G-Cter in ubiquitin); alternate" evidence="7">
    <location>
        <position position="35"/>
    </location>
</feature>
<feature type="cross-link" description="Glycyl lysine isopeptide (Lys-Gly) (interchain with G-Cter in ubiquitin); alternate" evidence="7">
    <location>
        <position position="121"/>
    </location>
</feature>
<organism>
    <name type="scientific">Mus musculus</name>
    <name type="common">Mouse</name>
    <dbReference type="NCBI Taxonomy" id="10090"/>
    <lineage>
        <taxon>Eukaryota</taxon>
        <taxon>Metazoa</taxon>
        <taxon>Chordata</taxon>
        <taxon>Craniata</taxon>
        <taxon>Vertebrata</taxon>
        <taxon>Euteleostomi</taxon>
        <taxon>Mammalia</taxon>
        <taxon>Eutheria</taxon>
        <taxon>Euarchontoglires</taxon>
        <taxon>Glires</taxon>
        <taxon>Rodentia</taxon>
        <taxon>Myomorpha</taxon>
        <taxon>Muroidea</taxon>
        <taxon>Muridae</taxon>
        <taxon>Murinae</taxon>
        <taxon>Mus</taxon>
        <taxon>Mus</taxon>
    </lineage>
</organism>
<proteinExistence type="evidence at protein level"/>
<comment type="function">
    <text>Core component of nucleosome. Nucleosomes wrap and compact DNA into chromatin, limiting DNA accessibility to the cellular machineries which require DNA as a template. Histones thereby play a central role in transcription regulation, DNA repair, DNA replication and chromosomal stability. DNA accessibility is regulated via a complex set of post-translational modifications of histones, also called histone code, and nucleosome remodeling.</text>
</comment>
<comment type="subunit">
    <text>The nucleosome is a histone octamer containing two molecules each of H2A, H2B, H3 and H4 assembled in one H3-H4 heterotetramer and two H2A-H2B heterodimers. The octamer wraps approximately 147 bp of DNA.</text>
</comment>
<comment type="subcellular location">
    <subcellularLocation>
        <location>Nucleus</location>
    </subcellularLocation>
    <subcellularLocation>
        <location>Chromosome</location>
    </subcellularLocation>
</comment>
<comment type="PTM">
    <text evidence="2">Monoubiquitination at Lys-35 (H2BK34Ub) by the MSL1/MSL2 dimer is required for histone H3 'Lys-4' (H3K4me) and 'Lys-79' (H3K79me) methylation and transcription activation at specific gene loci, such as HOXA9 and MEIS1 loci. Similarly, monoubiquitination at Lys-121 (H2BK120Ub) by the RNF20/40 complex gives a specific tag for epigenetic transcriptional activation and is also prerequisite for histone H3 'Lys-4' and 'Lys-79' methylation. It also functions cooperatively with the FACT dimer to stimulate elongation by RNA polymerase II. H2BK120Ub also acts as a regulator of mRNA splicing: deubiquitination by USP49 is required for efficient cotranscriptional splicing of a large set of exons (By similarity).</text>
</comment>
<comment type="PTM">
    <text evidence="10 11 12 18">Phosphorylated on Ser-15 (H2BS14ph) by STK4/MST1 during apoptosis; which facilitates apoptotic chromatin condensation (PubMed:15197225, PubMed:16039583). Also phosphorylated on Ser-15 in response to DNA double strand breaks (DSBs), and in correlation with somatic hypermutation and immunoglobulin class-switch recombination (PubMed:15197225). Phosphorylation at Ser-37 (H2BS36ph) by AMPK in response to stress promotes transcription (PubMed:20647423, PubMed:32822587).</text>
</comment>
<comment type="PTM">
    <text evidence="4">GlcNAcylation at Ser-113 promotes monoubiquitination of Lys-121. It fluctuates in response to extracellular glucose, and associates with transcribed genes (By similarity).</text>
</comment>
<comment type="PTM">
    <text evidence="2 18">ADP-ribosylated by PARP1 or PARP2 on Ser-7 (H2BS6ADPr) in response to DNA damage (By similarity). H2BS6ADPr promotes recruitment of CHD1L (By similarity). Poly ADP-ribosylation on Glu-36 (H2BE35ADPr) by PARP1 regulates adipogenesis: it inhibits phosphorylation at Ser-37 (H2BS36ph), thereby blocking expression of pro-adipogenetic genes (PubMed:32822587).</text>
</comment>
<comment type="PTM">
    <text evidence="13">Crotonylation (Kcr) is specifically present in male germ cells and marks testis-specific genes in post-meiotic cells, including X-linked genes that escape sex chromosome inactivation in haploid cells. Crotonylation marks active promoters and enhancers and confers resistance to transcriptional repressors. It is also associated with post-meiotically activated genes on autosomes.</text>
</comment>
<comment type="PTM">
    <text evidence="16">Hydroxybutyrylation of histones is induced by starvation.</text>
</comment>
<comment type="PTM">
    <text evidence="2">Lactylated in macrophages by EP300/P300 by using lactoyl-CoA directly derived from endogenous or exogenous lactate, leading to stimulates gene transcription.</text>
</comment>
<comment type="similarity">
    <text evidence="19">Belongs to the histone H2B family.</text>
</comment>
<comment type="caution">
    <text evidence="19">Defined as a pseudogene by MGI. However, proteomics data suggest the existence of the protein.</text>
</comment>
<comment type="sequence caution" evidence="19">
    <conflict type="erroneous initiation">
        <sequence resource="EMBL-CDS" id="AAI07303"/>
    </conflict>
    <text>Extended N-terminus.</text>
</comment>
<comment type="sequence caution" evidence="19">
    <conflict type="erroneous initiation">
        <sequence resource="EMBL-CDS" id="AAO06253"/>
    </conflict>
    <text>Extended N-terminus.</text>
</comment>
<sequence length="126" mass="13908">MPDPSKSAPAPKKGSKKAVTKAQKKDGKKRKRGRKESYSIYVYKVLKQVHPDTGISSKAMGIMNSFVNDIFERIASEASRLAHYNKRSTITSREVQTAVRLLLPGELAKHAVSEGTKAVTKYTSSK</sequence>
<reference key="1">
    <citation type="journal article" date="2002" name="Genomics">
        <title>The human and mouse replication-dependent histone genes.</title>
        <authorList>
            <person name="Marzluff W.F."/>
            <person name="Gongidi P."/>
            <person name="Woods K.R."/>
            <person name="Jin J."/>
            <person name="Maltais L.J."/>
        </authorList>
    </citation>
    <scope>NUCLEOTIDE SEQUENCE [GENOMIC DNA]</scope>
</reference>
<reference key="2">
    <citation type="journal article" date="2004" name="Genome Res.">
        <title>The status, quality, and expansion of the NIH full-length cDNA project: the Mammalian Gene Collection (MGC).</title>
        <authorList>
            <consortium name="The MGC Project Team"/>
        </authorList>
    </citation>
    <scope>NUCLEOTIDE SEQUENCE [LARGE SCALE MRNA]</scope>
</reference>
<reference key="3">
    <citation type="journal article" date="2004" name="J. Exp. Med.">
        <title>Phosphorylation of histone H2B at DNA double-strand breaks.</title>
        <authorList>
            <person name="Fernandez-Capetillo O."/>
            <person name="Allis C.D."/>
            <person name="Nussenzweig A."/>
        </authorList>
    </citation>
    <scope>PHOSPHORYLATION AT SER-15</scope>
</reference>
<reference key="4">
    <citation type="journal article" date="2005" name="Immunity">
        <title>Histone modifications associated with somatic hypermutation.</title>
        <authorList>
            <person name="Odegard V.H."/>
            <person name="Kim S.T."/>
            <person name="Anderson S.M."/>
            <person name="Shlomchik M.J."/>
            <person name="Schatz D.G."/>
        </authorList>
    </citation>
    <scope>PHOSPHORYLATION AT SER-15</scope>
</reference>
<reference key="5">
    <citation type="journal article" date="2010" name="Science">
        <title>Signaling kinase AMPK activates stress-promoted transcription via histone H2B phosphorylation.</title>
        <authorList>
            <person name="Bungard D."/>
            <person name="Fuerth B.J."/>
            <person name="Zeng P.Y."/>
            <person name="Faubert B."/>
            <person name="Maas N.L."/>
            <person name="Viollet B."/>
            <person name="Carling D."/>
            <person name="Thompson C.B."/>
            <person name="Jones R.G."/>
            <person name="Berger S.L."/>
        </authorList>
    </citation>
    <scope>PHOSPHORYLATION AT SER-37</scope>
</reference>
<reference key="6">
    <citation type="journal article" date="2011" name="Cell">
        <title>Identification of 67 histone marks and histone lysine crotonylation as a new type of histone modification.</title>
        <authorList>
            <person name="Tan M."/>
            <person name="Luo H."/>
            <person name="Lee S."/>
            <person name="Jin F."/>
            <person name="Yang J.S."/>
            <person name="Montellier E."/>
            <person name="Buchou T."/>
            <person name="Cheng Z."/>
            <person name="Rousseaux S."/>
            <person name="Rajagopal N."/>
            <person name="Lu Z."/>
            <person name="Ye Z."/>
            <person name="Zhu Q."/>
            <person name="Wysocka J."/>
            <person name="Ye Y."/>
            <person name="Khochbin S."/>
            <person name="Ren B."/>
            <person name="Zhao Y."/>
        </authorList>
    </citation>
    <scope>CROTONYLATION AT LYS-6; LYS-12; LYS-13; LYS-16; LYS-17; LYS-21; LYS-24 AND LYS-35</scope>
</reference>
<reference key="7">
    <citation type="journal article" date="2012" name="Mol. Cell. Proteomics">
        <title>Lysine succinylation and lysine malonylation in histones.</title>
        <authorList>
            <person name="Xie Z."/>
            <person name="Dai J."/>
            <person name="Dai L."/>
            <person name="Tan M."/>
            <person name="Cheng Z."/>
            <person name="Wu Y."/>
            <person name="Boeke J.D."/>
            <person name="Zhao Y."/>
        </authorList>
    </citation>
    <scope>SUCCINYLATION AT LYS-121</scope>
</reference>
<reference key="8">
    <citation type="journal article" date="2014" name="Nat. Chem. Biol.">
        <title>Lysine 2-hydroxyisobutyrylation is a widely distributed active histone mark.</title>
        <authorList>
            <person name="Dai L."/>
            <person name="Peng C."/>
            <person name="Montellier E."/>
            <person name="Lu Z."/>
            <person name="Chen Y."/>
            <person name="Ishii H."/>
            <person name="Debernardi A."/>
            <person name="Buchou T."/>
            <person name="Rousseaux S."/>
            <person name="Jin F."/>
            <person name="Sabari B.R."/>
            <person name="Deng Z."/>
            <person name="Allis C.D."/>
            <person name="Ren B."/>
            <person name="Khochbin S."/>
            <person name="Zhao Y."/>
        </authorList>
    </citation>
    <scope>HYDROXYBUTYRYLATION AT LYS-6; LYS-13; LYS-21; LYS-24; LYS-25; LYS-35; LYS-44; LYS-47; LYS-58; LYS-86; LYS-109; LYS-117 AND LYS-121</scope>
</reference>
<reference key="9">
    <citation type="journal article" date="2016" name="Mol. Cell">
        <title>Metabolic regulation of gene expression by histone lysine beta-hydroxybutyrylation.</title>
        <authorList>
            <person name="Xie Z."/>
            <person name="Zhang D."/>
            <person name="Chung D."/>
            <person name="Tang Z."/>
            <person name="Huang H."/>
            <person name="Dai L."/>
            <person name="Qi S."/>
            <person name="Li J."/>
            <person name="Colak G."/>
            <person name="Chen Y."/>
            <person name="Xia C."/>
            <person name="Peng C."/>
            <person name="Ruan H."/>
            <person name="Kirkey M."/>
            <person name="Wang D."/>
            <person name="Jensen L.M."/>
            <person name="Kwon O.K."/>
            <person name="Lee S."/>
            <person name="Pletcher S.D."/>
            <person name="Tan M."/>
            <person name="Lombard D.B."/>
            <person name="White K.P."/>
            <person name="Zhao H."/>
            <person name="Li J."/>
            <person name="Roeder R.G."/>
            <person name="Yang X."/>
            <person name="Zhao Y."/>
        </authorList>
    </citation>
    <scope>HYDROXYBUTYRYLATION AT LYS-6; LYS-12; LYS-21; LYS-35; LYS-109 AND LYS-117</scope>
</reference>
<reference key="10">
    <citation type="journal article" date="2019" name="Nature">
        <title>Metabolic regulation of gene expression by histone lactylation.</title>
        <authorList>
            <person name="Zhang D."/>
            <person name="Tang Z."/>
            <person name="Huang H."/>
            <person name="Zhou G."/>
            <person name="Cui C."/>
            <person name="Weng Y."/>
            <person name="Liu W."/>
            <person name="Kim S."/>
            <person name="Lee S."/>
            <person name="Perez-Neut M."/>
            <person name="Ding J."/>
            <person name="Czyz D."/>
            <person name="Hu R."/>
            <person name="Ye Z."/>
            <person name="He M."/>
            <person name="Zheng Y.G."/>
            <person name="Shuman H.A."/>
            <person name="Dai L."/>
            <person name="Ren B."/>
            <person name="Roeder R.G."/>
            <person name="Becker L."/>
            <person name="Zhao Y."/>
        </authorList>
    </citation>
    <scope>LACTYLATION AT LYS-6; LYS-12; LYS-16; LYS-17; LYS-21; LYS-86; LYS-109 AND LYS-117</scope>
</reference>
<reference key="11">
    <citation type="journal article" date="2020" name="Mol. Cell">
        <title>Functional interplay between histone H2B ADP-ribosylation and phosphorylation controls adipogenesis.</title>
        <authorList>
            <person name="Huang D."/>
            <person name="Camacho C.V."/>
            <person name="Setlem R."/>
            <person name="Ryu K.W."/>
            <person name="Parameswaran B."/>
            <person name="Gupta R.K."/>
            <person name="Kraus W.L."/>
        </authorList>
    </citation>
    <scope>ADP-RIBOSYLATION AT GLU-36</scope>
    <scope>PHOSPHORYLATION AT SER-37</scope>
</reference>
<evidence type="ECO:0000250" key="1">
    <source>
        <dbReference type="UniProtKB" id="P23527"/>
    </source>
</evidence>
<evidence type="ECO:0000250" key="2">
    <source>
        <dbReference type="UniProtKB" id="P33778"/>
    </source>
</evidence>
<evidence type="ECO:0000250" key="3">
    <source>
        <dbReference type="UniProtKB" id="P58876"/>
    </source>
</evidence>
<evidence type="ECO:0000250" key="4">
    <source>
        <dbReference type="UniProtKB" id="P62807"/>
    </source>
</evidence>
<evidence type="ECO:0000250" key="5">
    <source>
        <dbReference type="UniProtKB" id="Q00729"/>
    </source>
</evidence>
<evidence type="ECO:0000250" key="6">
    <source>
        <dbReference type="UniProtKB" id="Q5QNW6"/>
    </source>
</evidence>
<evidence type="ECO:0000250" key="7">
    <source>
        <dbReference type="UniProtKB" id="Q8N257"/>
    </source>
</evidence>
<evidence type="ECO:0000250" key="8">
    <source>
        <dbReference type="UniProtKB" id="Q96A08"/>
    </source>
</evidence>
<evidence type="ECO:0000256" key="9">
    <source>
        <dbReference type="SAM" id="MobiDB-lite"/>
    </source>
</evidence>
<evidence type="ECO:0000269" key="10">
    <source>
    </source>
</evidence>
<evidence type="ECO:0000269" key="11">
    <source>
    </source>
</evidence>
<evidence type="ECO:0000269" key="12">
    <source>
    </source>
</evidence>
<evidence type="ECO:0000269" key="13">
    <source>
    </source>
</evidence>
<evidence type="ECO:0000269" key="14">
    <source>
    </source>
</evidence>
<evidence type="ECO:0000269" key="15">
    <source>
    </source>
</evidence>
<evidence type="ECO:0000269" key="16">
    <source>
    </source>
</evidence>
<evidence type="ECO:0000269" key="17">
    <source>
    </source>
</evidence>
<evidence type="ECO:0000269" key="18">
    <source>
    </source>
</evidence>
<evidence type="ECO:0000305" key="19"/>
<evidence type="ECO:0000312" key="20">
    <source>
        <dbReference type="MGI" id="MGI:1922442"/>
    </source>
</evidence>
<dbReference type="EMBL" id="AY158943">
    <property type="protein sequence ID" value="AAO06253.1"/>
    <property type="status" value="ALT_INIT"/>
    <property type="molecule type" value="Genomic_DNA"/>
</dbReference>
<dbReference type="EMBL" id="BC107301">
    <property type="protein sequence ID" value="AAI07302.1"/>
    <property type="molecule type" value="mRNA"/>
</dbReference>
<dbReference type="EMBL" id="BC107302">
    <property type="protein sequence ID" value="AAI07303.1"/>
    <property type="status" value="ALT_INIT"/>
    <property type="molecule type" value="mRNA"/>
</dbReference>
<dbReference type="RefSeq" id="NP_001380452.1">
    <property type="nucleotide sequence ID" value="NM_001393523.1"/>
</dbReference>
<dbReference type="SMR" id="Q8CGP0"/>
<dbReference type="BioGRID" id="238405">
    <property type="interactions" value="4"/>
</dbReference>
<dbReference type="FunCoup" id="Q8CGP0">
    <property type="interactions" value="661"/>
</dbReference>
<dbReference type="IntAct" id="Q8CGP0">
    <property type="interactions" value="1"/>
</dbReference>
<dbReference type="GlyGen" id="Q8CGP0">
    <property type="glycosylation" value="1 site"/>
</dbReference>
<dbReference type="iPTMnet" id="Q8CGP0"/>
<dbReference type="PhosphoSitePlus" id="Q8CGP0"/>
<dbReference type="SwissPalm" id="Q8CGP0"/>
<dbReference type="jPOST" id="Q8CGP0"/>
<dbReference type="PeptideAtlas" id="Q8CGP0"/>
<dbReference type="ProteomicsDB" id="271380"/>
<dbReference type="TopDownProteomics" id="Q8CGP0"/>
<dbReference type="Ensembl" id="ENSMUST00000117558.3">
    <property type="protein sequence ID" value="ENSMUSP00001091675.1"/>
    <property type="gene ID" value="ENSMUSG00000080712.5"/>
</dbReference>
<dbReference type="GeneID" id="382522"/>
<dbReference type="UCSC" id="uc007jcs.1">
    <property type="organism name" value="mouse"/>
</dbReference>
<dbReference type="AGR" id="MGI:1922442"/>
<dbReference type="MGI" id="MGI:1922442">
    <property type="gene designation" value="H2bc26"/>
</dbReference>
<dbReference type="GeneTree" id="ENSGT01110000267152"/>
<dbReference type="InParanoid" id="Q8CGP0"/>
<dbReference type="OrthoDB" id="9618206at2759"/>
<dbReference type="Reactome" id="R-MMU-110330">
    <property type="pathway name" value="Recognition and association of DNA glycosylase with site containing an affected purine"/>
</dbReference>
<dbReference type="Reactome" id="R-MMU-110331">
    <property type="pathway name" value="Cleavage of the damaged purine"/>
</dbReference>
<dbReference type="Reactome" id="R-MMU-212300">
    <property type="pathway name" value="PRC2 methylates histones and DNA"/>
</dbReference>
<dbReference type="Reactome" id="R-MMU-2299718">
    <property type="pathway name" value="Condensation of Prophase Chromosomes"/>
</dbReference>
<dbReference type="Reactome" id="R-MMU-2559586">
    <property type="pathway name" value="DNA Damage/Telomere Stress Induced Senescence"/>
</dbReference>
<dbReference type="Reactome" id="R-MMU-3214815">
    <property type="pathway name" value="HDACs deacetylate histones"/>
</dbReference>
<dbReference type="Reactome" id="R-MMU-3214847">
    <property type="pathway name" value="HATs acetylate histones"/>
</dbReference>
<dbReference type="Reactome" id="R-MMU-5693565">
    <property type="pathway name" value="Recruitment and ATM-mediated phosphorylation of repair and signaling proteins at DNA double strand breaks"/>
</dbReference>
<dbReference type="Reactome" id="R-MMU-5693571">
    <property type="pathway name" value="Nonhomologous End-Joining (NHEJ)"/>
</dbReference>
<dbReference type="Reactome" id="R-MMU-5693607">
    <property type="pathway name" value="Processing of DNA double-strand break ends"/>
</dbReference>
<dbReference type="Reactome" id="R-MMU-606279">
    <property type="pathway name" value="Deposition of new CENPA-containing nucleosomes at the centromere"/>
</dbReference>
<dbReference type="Reactome" id="R-MMU-69473">
    <property type="pathway name" value="G2/M DNA damage checkpoint"/>
</dbReference>
<dbReference type="Reactome" id="R-MMU-8936459">
    <property type="pathway name" value="RUNX1 regulates genes involved in megakaryocyte differentiation and platelet function"/>
</dbReference>
<dbReference type="Reactome" id="R-MMU-9018519">
    <property type="pathway name" value="Estrogen-dependent gene expression"/>
</dbReference>
<dbReference type="Reactome" id="R-MMU-9670095">
    <property type="pathway name" value="Inhibition of DNA recombination at telomere"/>
</dbReference>
<dbReference type="Reactome" id="R-MMU-9841922">
    <property type="pathway name" value="MLL4 and MLL3 complexes regulate expression of PPARG target genes in adipogenesis and hepatic steatosis"/>
</dbReference>
<dbReference type="Reactome" id="R-MMU-9843940">
    <property type="pathway name" value="Regulation of endogenous retroelements by KRAB-ZFP proteins"/>
</dbReference>
<dbReference type="PRO" id="PR:Q8CGP0"/>
<dbReference type="Proteomes" id="UP000000589">
    <property type="component" value="Chromosome 11"/>
</dbReference>
<dbReference type="RNAct" id="Q8CGP0">
    <property type="molecule type" value="protein"/>
</dbReference>
<dbReference type="GO" id="GO:0005829">
    <property type="term" value="C:cytosol"/>
    <property type="evidence" value="ECO:0007669"/>
    <property type="project" value="Ensembl"/>
</dbReference>
<dbReference type="GO" id="GO:0005654">
    <property type="term" value="C:nucleoplasm"/>
    <property type="evidence" value="ECO:0000304"/>
    <property type="project" value="Reactome"/>
</dbReference>
<dbReference type="GO" id="GO:0000786">
    <property type="term" value="C:nucleosome"/>
    <property type="evidence" value="ECO:0007669"/>
    <property type="project" value="UniProtKB-KW"/>
</dbReference>
<dbReference type="GO" id="GO:0003677">
    <property type="term" value="F:DNA binding"/>
    <property type="evidence" value="ECO:0007669"/>
    <property type="project" value="UniProtKB-KW"/>
</dbReference>
<dbReference type="GO" id="GO:0046982">
    <property type="term" value="F:protein heterodimerization activity"/>
    <property type="evidence" value="ECO:0007669"/>
    <property type="project" value="InterPro"/>
</dbReference>
<dbReference type="GO" id="GO:0030527">
    <property type="term" value="F:structural constituent of chromatin"/>
    <property type="evidence" value="ECO:0007669"/>
    <property type="project" value="InterPro"/>
</dbReference>
<dbReference type="CDD" id="cd22910">
    <property type="entry name" value="HFD_H2B"/>
    <property type="match status" value="1"/>
</dbReference>
<dbReference type="FunFam" id="1.10.20.10:FF:000003">
    <property type="entry name" value="Histone H2B"/>
    <property type="match status" value="1"/>
</dbReference>
<dbReference type="Gene3D" id="1.10.20.10">
    <property type="entry name" value="Histone, subunit A"/>
    <property type="match status" value="1"/>
</dbReference>
<dbReference type="InterPro" id="IPR009072">
    <property type="entry name" value="Histone-fold"/>
</dbReference>
<dbReference type="InterPro" id="IPR007125">
    <property type="entry name" value="Histone_H2A/H2B/H3"/>
</dbReference>
<dbReference type="InterPro" id="IPR000558">
    <property type="entry name" value="Histone_H2B"/>
</dbReference>
<dbReference type="InterPro" id="IPR055333">
    <property type="entry name" value="HISTONE_H2B_site"/>
</dbReference>
<dbReference type="PANTHER" id="PTHR23428">
    <property type="entry name" value="HISTONE H2B"/>
    <property type="match status" value="1"/>
</dbReference>
<dbReference type="Pfam" id="PF00125">
    <property type="entry name" value="Histone"/>
    <property type="match status" value="1"/>
</dbReference>
<dbReference type="PRINTS" id="PR00621">
    <property type="entry name" value="HISTONEH2B"/>
</dbReference>
<dbReference type="SMART" id="SM00427">
    <property type="entry name" value="H2B"/>
    <property type="match status" value="1"/>
</dbReference>
<dbReference type="SUPFAM" id="SSF47113">
    <property type="entry name" value="Histone-fold"/>
    <property type="match status" value="1"/>
</dbReference>
<dbReference type="PROSITE" id="PS00357">
    <property type="entry name" value="HISTONE_H2B"/>
    <property type="match status" value="1"/>
</dbReference>
<name>H2B3B_MOUSE</name>
<accession>Q8CGP0</accession>
<accession>Q3B7Z7</accession>